<feature type="transit peptide" description="Chloroplast" evidence="2">
    <location>
        <begin position="1"/>
        <end position="49"/>
    </location>
</feature>
<feature type="chain" id="PRO_0000011137" description="Starch synthase 1, chloroplastic/amyloplastic">
    <location>
        <begin position="50"/>
        <end position="652"/>
    </location>
</feature>
<feature type="binding site" evidence="1">
    <location>
        <position position="156"/>
    </location>
    <ligand>
        <name>ADP-alpha-D-glucose</name>
        <dbReference type="ChEBI" id="CHEBI:57498"/>
    </ligand>
</feature>
<feature type="sequence conflict" description="In Ref. 5; AAF24126." evidence="6" ref="5">
    <original>LGFQLTPP</original>
    <variation>MNSIFPCT</variation>
    <location>
        <begin position="78"/>
        <end position="85"/>
    </location>
</feature>
<feature type="sequence conflict" description="In Ref. 5; AAF24126." evidence="6" ref="5">
    <original>Q</original>
    <variation>E</variation>
    <location>
        <position position="89"/>
    </location>
</feature>
<feature type="sequence conflict" description="In Ref. 5; AAF24126." evidence="6" ref="5">
    <original>Y</original>
    <variation>H</variation>
    <location>
        <position position="222"/>
    </location>
</feature>
<feature type="sequence conflict" description="In Ref. 5; AAF24126." evidence="6" ref="5">
    <original>T</original>
    <variation>A</variation>
    <location>
        <position position="584"/>
    </location>
</feature>
<proteinExistence type="evidence at transcript level"/>
<reference key="1">
    <citation type="journal article" date="1997" name="DNA Res.">
        <title>Structural analysis of Arabidopsis thaliana chromosome 5. II. Sequence features of the regions of 1,044,062 bp covered by thirteen physically assigned P1 clones.</title>
        <authorList>
            <person name="Kotani H."/>
            <person name="Nakamura Y."/>
            <person name="Sato S."/>
            <person name="Kaneko T."/>
            <person name="Asamizu E."/>
            <person name="Miyajima N."/>
            <person name="Tabata S."/>
        </authorList>
    </citation>
    <scope>NUCLEOTIDE SEQUENCE [LARGE SCALE GENOMIC DNA]</scope>
    <source>
        <strain>cv. Columbia</strain>
    </source>
</reference>
<reference key="2">
    <citation type="journal article" date="2017" name="Plant J.">
        <title>Araport11: a complete reannotation of the Arabidopsis thaliana reference genome.</title>
        <authorList>
            <person name="Cheng C.Y."/>
            <person name="Krishnakumar V."/>
            <person name="Chan A.P."/>
            <person name="Thibaud-Nissen F."/>
            <person name="Schobel S."/>
            <person name="Town C.D."/>
        </authorList>
    </citation>
    <scope>GENOME REANNOTATION</scope>
    <source>
        <strain>cv. Columbia</strain>
    </source>
</reference>
<reference key="3">
    <citation type="journal article" date="2003" name="Science">
        <title>Empirical analysis of transcriptional activity in the Arabidopsis genome.</title>
        <authorList>
            <person name="Yamada K."/>
            <person name="Lim J."/>
            <person name="Dale J.M."/>
            <person name="Chen H."/>
            <person name="Shinn P."/>
            <person name="Palm C.J."/>
            <person name="Southwick A.M."/>
            <person name="Wu H.C."/>
            <person name="Kim C.J."/>
            <person name="Nguyen M."/>
            <person name="Pham P.K."/>
            <person name="Cheuk R.F."/>
            <person name="Karlin-Newmann G."/>
            <person name="Liu S.X."/>
            <person name="Lam B."/>
            <person name="Sakano H."/>
            <person name="Wu T."/>
            <person name="Yu G."/>
            <person name="Miranda M."/>
            <person name="Quach H.L."/>
            <person name="Tripp M."/>
            <person name="Chang C.H."/>
            <person name="Lee J.M."/>
            <person name="Toriumi M.J."/>
            <person name="Chan M.M."/>
            <person name="Tang C.C."/>
            <person name="Onodera C.S."/>
            <person name="Deng J.M."/>
            <person name="Akiyama K."/>
            <person name="Ansari Y."/>
            <person name="Arakawa T."/>
            <person name="Banh J."/>
            <person name="Banno F."/>
            <person name="Bowser L."/>
            <person name="Brooks S.Y."/>
            <person name="Carninci P."/>
            <person name="Chao Q."/>
            <person name="Choy N."/>
            <person name="Enju A."/>
            <person name="Goldsmith A.D."/>
            <person name="Gurjal M."/>
            <person name="Hansen N.F."/>
            <person name="Hayashizaki Y."/>
            <person name="Johnson-Hopson C."/>
            <person name="Hsuan V.W."/>
            <person name="Iida K."/>
            <person name="Karnes M."/>
            <person name="Khan S."/>
            <person name="Koesema E."/>
            <person name="Ishida J."/>
            <person name="Jiang P.X."/>
            <person name="Jones T."/>
            <person name="Kawai J."/>
            <person name="Kamiya A."/>
            <person name="Meyers C."/>
            <person name="Nakajima M."/>
            <person name="Narusaka M."/>
            <person name="Seki M."/>
            <person name="Sakurai T."/>
            <person name="Satou M."/>
            <person name="Tamse R."/>
            <person name="Vaysberg M."/>
            <person name="Wallender E.K."/>
            <person name="Wong C."/>
            <person name="Yamamura Y."/>
            <person name="Yuan S."/>
            <person name="Shinozaki K."/>
            <person name="Davis R.W."/>
            <person name="Theologis A."/>
            <person name="Ecker J.R."/>
        </authorList>
    </citation>
    <scope>NUCLEOTIDE SEQUENCE [LARGE SCALE MRNA]</scope>
    <source>
        <strain>cv. Columbia</strain>
    </source>
</reference>
<reference key="4">
    <citation type="submission" date="2006-07" db="EMBL/GenBank/DDBJ databases">
        <title>Large-scale analysis of RIKEN Arabidopsis full-length (RAFL) cDNAs.</title>
        <authorList>
            <person name="Totoki Y."/>
            <person name="Seki M."/>
            <person name="Ishida J."/>
            <person name="Nakajima M."/>
            <person name="Enju A."/>
            <person name="Kamiya A."/>
            <person name="Narusaka M."/>
            <person name="Shin-i T."/>
            <person name="Nakagawa M."/>
            <person name="Sakamoto N."/>
            <person name="Oishi K."/>
            <person name="Kohara Y."/>
            <person name="Kobayashi M."/>
            <person name="Toyoda A."/>
            <person name="Sakaki Y."/>
            <person name="Sakurai T."/>
            <person name="Iida K."/>
            <person name="Akiyama K."/>
            <person name="Satou M."/>
            <person name="Toyoda T."/>
            <person name="Konagaya A."/>
            <person name="Carninci P."/>
            <person name="Kawai J."/>
            <person name="Hayashizaki Y."/>
            <person name="Shinozaki K."/>
        </authorList>
    </citation>
    <scope>NUCLEOTIDE SEQUENCE [LARGE SCALE MRNA]</scope>
    <source>
        <strain>cv. Columbia</strain>
    </source>
</reference>
<reference key="5">
    <citation type="submission" date="1999-01" db="EMBL/GenBank/DDBJ databases">
        <title>Characterization of Arabidopsis soluble starch synthase gene.</title>
        <authorList>
            <person name="Lue W.L."/>
            <person name="Wang S.M."/>
            <person name="Yu T.S."/>
            <person name="Chen J."/>
        </authorList>
    </citation>
    <scope>NUCLEOTIDE SEQUENCE [GENOMIC DNA] OF 78-652</scope>
</reference>
<reference key="6">
    <citation type="journal article" date="2005" name="Plant J.">
        <title>Soluble starch synthase I: a major determinant for the synthesis of amylopectin in Arabidopsis thaliana leaves.</title>
        <authorList>
            <person name="Delvalle D."/>
            <person name="Dumez S."/>
            <person name="Wattebled F."/>
            <person name="Roldan I."/>
            <person name="Planchot V."/>
            <person name="Berbezy P."/>
            <person name="Colonna P."/>
            <person name="Vyas D."/>
            <person name="Chatterjee M."/>
            <person name="Ball S."/>
            <person name="Merida A."/>
            <person name="D'Hulst C."/>
        </authorList>
    </citation>
    <scope>FUNCTION</scope>
    <scope>SUBCELLULAR LOCATION</scope>
    <scope>TISSUE SPECIFICITY</scope>
    <scope>INDUCTION</scope>
    <scope>DISRUPTION PHENOTYPE</scope>
    <source>
        <strain>cv. Columbia</strain>
    </source>
</reference>
<reference key="7">
    <citation type="journal article" date="2007" name="Plant J.">
        <title>The phenotype of soluble starch synthase IV defective mutants of Arabidopsis thaliana suggests a novel function of elongation enzymes in the control of starch granule formation.</title>
        <authorList>
            <person name="Roldan I."/>
            <person name="Wattebled F."/>
            <person name="Mercedes Lucas M."/>
            <person name="Delvalle D."/>
            <person name="Planchot V."/>
            <person name="Jimenez S."/>
            <person name="Perez R."/>
            <person name="Ball S."/>
            <person name="D'Hulst C."/>
            <person name="Merida A."/>
        </authorList>
    </citation>
    <scope>TISSUE SPECIFICITY</scope>
</reference>
<reference key="8">
    <citation type="journal article" date="2011" name="J. Exp. Bot.">
        <title>Integrated functions among multiple starch synthases determine both amylopectin chain length and branch linkage location in Arabidopsis leaf starch.</title>
        <authorList>
            <person name="Szydlowski N."/>
            <person name="Ragel P."/>
            <person name="Hennen-Bierwagen T.A."/>
            <person name="Planchot V."/>
            <person name="Myers A.M."/>
            <person name="Merida A."/>
            <person name="d'Hulst C."/>
            <person name="Wattebled F."/>
        </authorList>
    </citation>
    <scope>FUNCTION</scope>
</reference>
<gene>
    <name type="primary">SS1</name>
    <name type="ordered locus">At5g24300</name>
    <name type="ORF">MOP9.12</name>
</gene>
<accession>Q9FNF2</accession>
<accession>Q0WV88</accession>
<accession>Q9SEI7</accession>
<comment type="function">
    <text evidence="3 5">Involved in the synthesis of short glycan chains within amylopectin in leaves. Is required to generate chains up to about a degree of polymerization of 10 (DP10).</text>
</comment>
<comment type="catalytic activity">
    <reaction>
        <text>[(1-&gt;4)-alpha-D-glucosyl](n) + ADP-alpha-D-glucose = [(1-&gt;4)-alpha-D-glucosyl](n+1) + ADP + H(+)</text>
        <dbReference type="Rhea" id="RHEA:18189"/>
        <dbReference type="Rhea" id="RHEA-COMP:9584"/>
        <dbReference type="Rhea" id="RHEA-COMP:9587"/>
        <dbReference type="ChEBI" id="CHEBI:15378"/>
        <dbReference type="ChEBI" id="CHEBI:15444"/>
        <dbReference type="ChEBI" id="CHEBI:57498"/>
        <dbReference type="ChEBI" id="CHEBI:456216"/>
        <dbReference type="EC" id="2.4.1.21"/>
    </reaction>
</comment>
<comment type="pathway">
    <text>Glycan biosynthesis; starch biosynthesis.</text>
</comment>
<comment type="subcellular location">
    <subcellularLocation>
        <location evidence="3">Plastid</location>
        <location evidence="3">Chloroplast</location>
    </subcellularLocation>
    <subcellularLocation>
        <location evidence="3">Plastid</location>
        <location evidence="3">Amyloplast</location>
    </subcellularLocation>
</comment>
<comment type="tissue specificity">
    <text evidence="3 4">Expressed in roots, leaves, stems, buds and flowers.</text>
</comment>
<comment type="induction">
    <text evidence="3">Circadian-regulation with the lowest levels at the end of the dark period.</text>
</comment>
<comment type="disruption phenotype">
    <text evidence="3">No visible phenotype under normal growth conditions, but mutant plants have reduced starch content in leaves.</text>
</comment>
<comment type="similarity">
    <text evidence="6">Belongs to the glycosyltransferase 1 family. Bacterial/plant glycogen synthase subfamily.</text>
</comment>
<protein>
    <recommendedName>
        <fullName>Starch synthase 1, chloroplastic/amyloplastic</fullName>
        <shortName>AtSS1</shortName>
        <shortName>SSS</shortName>
        <ecNumber>2.4.1.21</ecNumber>
    </recommendedName>
    <alternativeName>
        <fullName>Soluble starch synthase I</fullName>
    </alternativeName>
</protein>
<keyword id="KW-0035">Amyloplast</keyword>
<keyword id="KW-0150">Chloroplast</keyword>
<keyword id="KW-0328">Glycosyltransferase</keyword>
<keyword id="KW-0934">Plastid</keyword>
<keyword id="KW-1185">Reference proteome</keyword>
<keyword id="KW-0750">Starch biosynthesis</keyword>
<keyword id="KW-0808">Transferase</keyword>
<keyword id="KW-0809">Transit peptide</keyword>
<name>SSY1_ARATH</name>
<dbReference type="EC" id="2.4.1.21"/>
<dbReference type="EMBL" id="AB006701">
    <property type="protein sequence ID" value="BAB10396.1"/>
    <property type="molecule type" value="Genomic_DNA"/>
</dbReference>
<dbReference type="EMBL" id="CP002688">
    <property type="protein sequence ID" value="AED93282.1"/>
    <property type="molecule type" value="Genomic_DNA"/>
</dbReference>
<dbReference type="EMBL" id="CP002688">
    <property type="protein sequence ID" value="AED93283.1"/>
    <property type="molecule type" value="Genomic_DNA"/>
</dbReference>
<dbReference type="EMBL" id="AY128273">
    <property type="protein sequence ID" value="AAM91082.1"/>
    <property type="molecule type" value="mRNA"/>
</dbReference>
<dbReference type="EMBL" id="AK226881">
    <property type="protein sequence ID" value="BAE98960.1"/>
    <property type="molecule type" value="mRNA"/>
</dbReference>
<dbReference type="EMBL" id="AF121673">
    <property type="protein sequence ID" value="AAF24126.1"/>
    <property type="molecule type" value="Genomic_DNA"/>
</dbReference>
<dbReference type="RefSeq" id="NP_001190378.1">
    <property type="nucleotide sequence ID" value="NM_001203449.1"/>
</dbReference>
<dbReference type="RefSeq" id="NP_197818.1">
    <property type="nucleotide sequence ID" value="NM_122336.5"/>
</dbReference>
<dbReference type="SMR" id="Q9FNF2"/>
<dbReference type="BioGRID" id="17772">
    <property type="interactions" value="1"/>
</dbReference>
<dbReference type="FunCoup" id="Q9FNF2">
    <property type="interactions" value="949"/>
</dbReference>
<dbReference type="STRING" id="3702.Q9FNF2"/>
<dbReference type="CAZy" id="GT5">
    <property type="family name" value="Glycosyltransferase Family 5"/>
</dbReference>
<dbReference type="iPTMnet" id="Q9FNF2"/>
<dbReference type="PaxDb" id="3702-AT5G24300.1"/>
<dbReference type="ProteomicsDB" id="228340"/>
<dbReference type="EnsemblPlants" id="AT5G24300.1">
    <property type="protein sequence ID" value="AT5G24300.1"/>
    <property type="gene ID" value="AT5G24300"/>
</dbReference>
<dbReference type="EnsemblPlants" id="AT5G24300.2">
    <property type="protein sequence ID" value="AT5G24300.2"/>
    <property type="gene ID" value="AT5G24300"/>
</dbReference>
<dbReference type="GeneID" id="832497"/>
<dbReference type="Gramene" id="AT5G24300.1">
    <property type="protein sequence ID" value="AT5G24300.1"/>
    <property type="gene ID" value="AT5G24300"/>
</dbReference>
<dbReference type="Gramene" id="AT5G24300.2">
    <property type="protein sequence ID" value="AT5G24300.2"/>
    <property type="gene ID" value="AT5G24300"/>
</dbReference>
<dbReference type="KEGG" id="ath:AT5G24300"/>
<dbReference type="Araport" id="AT5G24300"/>
<dbReference type="TAIR" id="AT5G24300">
    <property type="gene designation" value="SS1"/>
</dbReference>
<dbReference type="eggNOG" id="ENOG502QTWM">
    <property type="taxonomic scope" value="Eukaryota"/>
</dbReference>
<dbReference type="HOGENOM" id="CLU_009583_18_2_1"/>
<dbReference type="InParanoid" id="Q9FNF2"/>
<dbReference type="OMA" id="TWCPWYM"/>
<dbReference type="PhylomeDB" id="Q9FNF2"/>
<dbReference type="BioCyc" id="ARA:AT5G24300-MONOMER"/>
<dbReference type="BioCyc" id="MetaCyc:AT5G24300-MONOMER"/>
<dbReference type="BRENDA" id="2.4.1.21">
    <property type="organism ID" value="399"/>
</dbReference>
<dbReference type="UniPathway" id="UPA00152"/>
<dbReference type="PRO" id="PR:Q9FNF2"/>
<dbReference type="Proteomes" id="UP000006548">
    <property type="component" value="Chromosome 5"/>
</dbReference>
<dbReference type="ExpressionAtlas" id="Q9FNF2">
    <property type="expression patterns" value="baseline and differential"/>
</dbReference>
<dbReference type="GO" id="GO:0009501">
    <property type="term" value="C:amyloplast"/>
    <property type="evidence" value="ECO:0007669"/>
    <property type="project" value="UniProtKB-SubCell"/>
</dbReference>
<dbReference type="GO" id="GO:0009507">
    <property type="term" value="C:chloroplast"/>
    <property type="evidence" value="ECO:0000314"/>
    <property type="project" value="TAIR"/>
</dbReference>
<dbReference type="GO" id="GO:0009570">
    <property type="term" value="C:chloroplast stroma"/>
    <property type="evidence" value="ECO:0007005"/>
    <property type="project" value="TAIR"/>
</dbReference>
<dbReference type="GO" id="GO:0009536">
    <property type="term" value="C:plastid"/>
    <property type="evidence" value="ECO:0007005"/>
    <property type="project" value="TAIR"/>
</dbReference>
<dbReference type="GO" id="GO:0009011">
    <property type="term" value="F:alpha-1,4-glucan glucosyltransferase (ADP-glucose donor) activity"/>
    <property type="evidence" value="ECO:0000314"/>
    <property type="project" value="UniProtKB"/>
</dbReference>
<dbReference type="GO" id="GO:0004373">
    <property type="term" value="F:alpha-1,4-glucan glucosyltransferase (UDP-glucose donor) activity"/>
    <property type="evidence" value="ECO:0007669"/>
    <property type="project" value="InterPro"/>
</dbReference>
<dbReference type="GO" id="GO:0010021">
    <property type="term" value="P:amylopectin biosynthetic process"/>
    <property type="evidence" value="ECO:0000314"/>
    <property type="project" value="TAIR"/>
</dbReference>
<dbReference type="GO" id="GO:0009960">
    <property type="term" value="P:endosperm development"/>
    <property type="evidence" value="ECO:0007669"/>
    <property type="project" value="EnsemblPlants"/>
</dbReference>
<dbReference type="GO" id="GO:0019252">
    <property type="term" value="P:starch biosynthetic process"/>
    <property type="evidence" value="ECO:0007669"/>
    <property type="project" value="UniProtKB-UniPathway"/>
</dbReference>
<dbReference type="CDD" id="cd03791">
    <property type="entry name" value="GT5_Glycogen_synthase_DULL1-like"/>
    <property type="match status" value="1"/>
</dbReference>
<dbReference type="FunFam" id="3.40.50.2000:FF:000048">
    <property type="entry name" value="Starch synthase, chloroplastic/amyloplastic"/>
    <property type="match status" value="1"/>
</dbReference>
<dbReference type="Gene3D" id="3.40.50.2000">
    <property type="entry name" value="Glycogen Phosphorylase B"/>
    <property type="match status" value="2"/>
</dbReference>
<dbReference type="HAMAP" id="MF_00484">
    <property type="entry name" value="Glycogen_synth"/>
    <property type="match status" value="1"/>
</dbReference>
<dbReference type="InterPro" id="IPR001296">
    <property type="entry name" value="Glyco_trans_1"/>
</dbReference>
<dbReference type="InterPro" id="IPR011835">
    <property type="entry name" value="GS/SS"/>
</dbReference>
<dbReference type="InterPro" id="IPR013534">
    <property type="entry name" value="Starch_synth_cat_dom"/>
</dbReference>
<dbReference type="NCBIfam" id="TIGR02095">
    <property type="entry name" value="glgA"/>
    <property type="match status" value="1"/>
</dbReference>
<dbReference type="PANTHER" id="PTHR45825:SF11">
    <property type="entry name" value="ALPHA AMYLASE DOMAIN-CONTAINING PROTEIN"/>
    <property type="match status" value="1"/>
</dbReference>
<dbReference type="PANTHER" id="PTHR45825">
    <property type="entry name" value="GRANULE-BOUND STARCH SYNTHASE 1, CHLOROPLASTIC/AMYLOPLASTIC"/>
    <property type="match status" value="1"/>
</dbReference>
<dbReference type="Pfam" id="PF08323">
    <property type="entry name" value="Glyco_transf_5"/>
    <property type="match status" value="1"/>
</dbReference>
<dbReference type="Pfam" id="PF00534">
    <property type="entry name" value="Glycos_transf_1"/>
    <property type="match status" value="1"/>
</dbReference>
<dbReference type="SUPFAM" id="SSF53756">
    <property type="entry name" value="UDP-Glycosyltransferase/glycogen phosphorylase"/>
    <property type="match status" value="1"/>
</dbReference>
<sequence>MASLQISGSVKFEPFVGFNRIRHFRPIASLGFPRFRRRFSIGRSLLLRRSSSFSGDSRESDEERFITDAERDGSGSVLGFQLTPPGDQQTVSTSTGEITHHEEKKEAIDQIVMADFGVPGNRAVEEGAAEVGIPSGKAEVVNNLVFVTSEAAPYSKTGGLGDVCGSLPIALAGRGHRVMVISPRYLNGTAADKNYARAKDLGIRVTVNCFGGSQEVSFYHEYRDGVDWVFVDHKSYHRPGNPYGDSKGAFGDNQFRFTLLCHAACEAPLVLPLGGFTYGEKSLFLVNDWHAGLVPILLAAKYRPYGVYKDARSILIIHNLAHQGVEPAATYTNLGLPSEWYGAVGWVFPTWARTHALDTGEAVNVLKGAIVTSDRIITVSQGYAWEITTVEGGYGLQDLLSSRKSVINGITNGINVDEWNPSTDEHIPFHYSADDVSEKIKCKMALQKELGLPIRPECPMIGFIGRLDYQKGIDLIQTAGPDLMVDDIQFVMLGSGDPKYESWMRSMEETYRDKFRGWVGFNVPISHRITAGCDILLMPSRFEPCGLNQLYAMRYGTIPVVHGTGGLRDTVENFNPYAEGGAGTGTGWVFTPLSKDSMVSALRLAAATYREYKQSWEGLMRRGMTRNYSWENAAVQYEQVFQWVFMDPPYVS</sequence>
<organism>
    <name type="scientific">Arabidopsis thaliana</name>
    <name type="common">Mouse-ear cress</name>
    <dbReference type="NCBI Taxonomy" id="3702"/>
    <lineage>
        <taxon>Eukaryota</taxon>
        <taxon>Viridiplantae</taxon>
        <taxon>Streptophyta</taxon>
        <taxon>Embryophyta</taxon>
        <taxon>Tracheophyta</taxon>
        <taxon>Spermatophyta</taxon>
        <taxon>Magnoliopsida</taxon>
        <taxon>eudicotyledons</taxon>
        <taxon>Gunneridae</taxon>
        <taxon>Pentapetalae</taxon>
        <taxon>rosids</taxon>
        <taxon>malvids</taxon>
        <taxon>Brassicales</taxon>
        <taxon>Brassicaceae</taxon>
        <taxon>Camelineae</taxon>
        <taxon>Arabidopsis</taxon>
    </lineage>
</organism>
<evidence type="ECO:0000250" key="1"/>
<evidence type="ECO:0000255" key="2"/>
<evidence type="ECO:0000269" key="3">
    <source>
    </source>
</evidence>
<evidence type="ECO:0000269" key="4">
    <source>
    </source>
</evidence>
<evidence type="ECO:0000269" key="5">
    <source>
    </source>
</evidence>
<evidence type="ECO:0000305" key="6"/>